<organism>
    <name type="scientific">Hyphomonas neptunium (strain ATCC 15444)</name>
    <dbReference type="NCBI Taxonomy" id="228405"/>
    <lineage>
        <taxon>Bacteria</taxon>
        <taxon>Pseudomonadati</taxon>
        <taxon>Pseudomonadota</taxon>
        <taxon>Alphaproteobacteria</taxon>
        <taxon>Hyphomonadales</taxon>
        <taxon>Hyphomonadaceae</taxon>
        <taxon>Hyphomonas</taxon>
    </lineage>
</organism>
<gene>
    <name evidence="1" type="primary">rimM</name>
    <name type="ordered locus">HNE_0041</name>
</gene>
<comment type="function">
    <text evidence="1">An accessory protein needed during the final step in the assembly of 30S ribosomal subunit, possibly for assembly of the head region. Essential for efficient processing of 16S rRNA. May be needed both before and after RbfA during the maturation of 16S rRNA. It has affinity for free ribosomal 30S subunits but not for 70S ribosomes.</text>
</comment>
<comment type="subunit">
    <text evidence="1">Binds ribosomal protein uS19.</text>
</comment>
<comment type="subcellular location">
    <subcellularLocation>
        <location evidence="1">Cytoplasm</location>
    </subcellularLocation>
</comment>
<comment type="domain">
    <text evidence="1">The PRC barrel domain binds ribosomal protein uS19.</text>
</comment>
<comment type="similarity">
    <text evidence="1">Belongs to the RimM family.</text>
</comment>
<protein>
    <recommendedName>
        <fullName evidence="1">Ribosome maturation factor RimM</fullName>
    </recommendedName>
</protein>
<name>RIMM_HYPNA</name>
<evidence type="ECO:0000255" key="1">
    <source>
        <dbReference type="HAMAP-Rule" id="MF_00014"/>
    </source>
</evidence>
<proteinExistence type="inferred from homology"/>
<dbReference type="EMBL" id="CP000158">
    <property type="protein sequence ID" value="ABI77165.1"/>
    <property type="molecule type" value="Genomic_DNA"/>
</dbReference>
<dbReference type="SMR" id="Q0C668"/>
<dbReference type="STRING" id="228405.HNE_0041"/>
<dbReference type="KEGG" id="hne:HNE_0041"/>
<dbReference type="eggNOG" id="COG0806">
    <property type="taxonomic scope" value="Bacteria"/>
</dbReference>
<dbReference type="HOGENOM" id="CLU_077636_0_1_5"/>
<dbReference type="Proteomes" id="UP000001959">
    <property type="component" value="Chromosome"/>
</dbReference>
<dbReference type="GO" id="GO:0005737">
    <property type="term" value="C:cytoplasm"/>
    <property type="evidence" value="ECO:0007669"/>
    <property type="project" value="UniProtKB-SubCell"/>
</dbReference>
<dbReference type="GO" id="GO:0005840">
    <property type="term" value="C:ribosome"/>
    <property type="evidence" value="ECO:0007669"/>
    <property type="project" value="InterPro"/>
</dbReference>
<dbReference type="GO" id="GO:0043022">
    <property type="term" value="F:ribosome binding"/>
    <property type="evidence" value="ECO:0007669"/>
    <property type="project" value="InterPro"/>
</dbReference>
<dbReference type="GO" id="GO:0042274">
    <property type="term" value="P:ribosomal small subunit biogenesis"/>
    <property type="evidence" value="ECO:0007669"/>
    <property type="project" value="UniProtKB-UniRule"/>
</dbReference>
<dbReference type="GO" id="GO:0006364">
    <property type="term" value="P:rRNA processing"/>
    <property type="evidence" value="ECO:0007669"/>
    <property type="project" value="UniProtKB-UniRule"/>
</dbReference>
<dbReference type="Gene3D" id="2.30.30.240">
    <property type="entry name" value="PRC-barrel domain"/>
    <property type="match status" value="1"/>
</dbReference>
<dbReference type="Gene3D" id="2.40.30.60">
    <property type="entry name" value="RimM"/>
    <property type="match status" value="1"/>
</dbReference>
<dbReference type="HAMAP" id="MF_00014">
    <property type="entry name" value="Ribosome_mat_RimM"/>
    <property type="match status" value="1"/>
</dbReference>
<dbReference type="InterPro" id="IPR027275">
    <property type="entry name" value="PRC-brl_dom"/>
</dbReference>
<dbReference type="InterPro" id="IPR011033">
    <property type="entry name" value="PRC_barrel-like_sf"/>
</dbReference>
<dbReference type="InterPro" id="IPR011961">
    <property type="entry name" value="RimM"/>
</dbReference>
<dbReference type="InterPro" id="IPR002676">
    <property type="entry name" value="RimM_N"/>
</dbReference>
<dbReference type="InterPro" id="IPR036976">
    <property type="entry name" value="RimM_N_sf"/>
</dbReference>
<dbReference type="InterPro" id="IPR009000">
    <property type="entry name" value="Transl_B-barrel_sf"/>
</dbReference>
<dbReference type="NCBIfam" id="TIGR02273">
    <property type="entry name" value="16S_RimM"/>
    <property type="match status" value="1"/>
</dbReference>
<dbReference type="PANTHER" id="PTHR33692">
    <property type="entry name" value="RIBOSOME MATURATION FACTOR RIMM"/>
    <property type="match status" value="1"/>
</dbReference>
<dbReference type="PANTHER" id="PTHR33692:SF1">
    <property type="entry name" value="RIBOSOME MATURATION FACTOR RIMM"/>
    <property type="match status" value="1"/>
</dbReference>
<dbReference type="Pfam" id="PF05239">
    <property type="entry name" value="PRC"/>
    <property type="match status" value="1"/>
</dbReference>
<dbReference type="Pfam" id="PF01782">
    <property type="entry name" value="RimM"/>
    <property type="match status" value="1"/>
</dbReference>
<dbReference type="SUPFAM" id="SSF50346">
    <property type="entry name" value="PRC-barrel domain"/>
    <property type="match status" value="1"/>
</dbReference>
<dbReference type="SUPFAM" id="SSF50447">
    <property type="entry name" value="Translation proteins"/>
    <property type="match status" value="1"/>
</dbReference>
<accession>Q0C668</accession>
<feature type="chain" id="PRO_0000321733" description="Ribosome maturation factor RimM">
    <location>
        <begin position="1"/>
        <end position="181"/>
    </location>
</feature>
<feature type="domain" description="PRC barrel" evidence="1">
    <location>
        <begin position="98"/>
        <end position="172"/>
    </location>
</feature>
<sequence length="181" mass="19982">MSADTKTQRLIPMGVLKGAHGVRGEVRVKSFTADPDALFTYGPLMDEAGKVLLTPITARPGKDHFIVRPKENLQKEDWDALRGCLLHASRDQLPEADEDEFYFEDLIGMPVYTVGEEPEARVRAVQNFGSGDLLEIEIPGAPATIYVPLTRADVPVIDMAAHRIVIPELSLWANQDEDDAS</sequence>
<keyword id="KW-0143">Chaperone</keyword>
<keyword id="KW-0963">Cytoplasm</keyword>
<keyword id="KW-1185">Reference proteome</keyword>
<keyword id="KW-0690">Ribosome biogenesis</keyword>
<keyword id="KW-0698">rRNA processing</keyword>
<reference key="1">
    <citation type="journal article" date="2006" name="J. Bacteriol.">
        <title>Comparative genomic evidence for a close relationship between the dimorphic prosthecate bacteria Hyphomonas neptunium and Caulobacter crescentus.</title>
        <authorList>
            <person name="Badger J.H."/>
            <person name="Hoover T.R."/>
            <person name="Brun Y.V."/>
            <person name="Weiner R.M."/>
            <person name="Laub M.T."/>
            <person name="Alexandre G."/>
            <person name="Mrazek J."/>
            <person name="Ren Q."/>
            <person name="Paulsen I.T."/>
            <person name="Nelson K.E."/>
            <person name="Khouri H.M."/>
            <person name="Radune D."/>
            <person name="Sosa J."/>
            <person name="Dodson R.J."/>
            <person name="Sullivan S.A."/>
            <person name="Rosovitz M.J."/>
            <person name="Madupu R."/>
            <person name="Brinkac L.M."/>
            <person name="Durkin A.S."/>
            <person name="Daugherty S.C."/>
            <person name="Kothari S.P."/>
            <person name="Giglio M.G."/>
            <person name="Zhou L."/>
            <person name="Haft D.H."/>
            <person name="Selengut J.D."/>
            <person name="Davidsen T.M."/>
            <person name="Yang Q."/>
            <person name="Zafar N."/>
            <person name="Ward N.L."/>
        </authorList>
    </citation>
    <scope>NUCLEOTIDE SEQUENCE [LARGE SCALE GENOMIC DNA]</scope>
    <source>
        <strain>ATCC 15444</strain>
    </source>
</reference>